<organism>
    <name type="scientific">Yersinia pseudotuberculosis serotype O:3 (strain YPIII)</name>
    <dbReference type="NCBI Taxonomy" id="502800"/>
    <lineage>
        <taxon>Bacteria</taxon>
        <taxon>Pseudomonadati</taxon>
        <taxon>Pseudomonadota</taxon>
        <taxon>Gammaproteobacteria</taxon>
        <taxon>Enterobacterales</taxon>
        <taxon>Yersiniaceae</taxon>
        <taxon>Yersinia</taxon>
    </lineage>
</organism>
<name>RL9_YERPY</name>
<reference key="1">
    <citation type="submission" date="2008-02" db="EMBL/GenBank/DDBJ databases">
        <title>Complete sequence of Yersinia pseudotuberculosis YPIII.</title>
        <authorList>
            <consortium name="US DOE Joint Genome Institute"/>
            <person name="Copeland A."/>
            <person name="Lucas S."/>
            <person name="Lapidus A."/>
            <person name="Glavina del Rio T."/>
            <person name="Dalin E."/>
            <person name="Tice H."/>
            <person name="Bruce D."/>
            <person name="Goodwin L."/>
            <person name="Pitluck S."/>
            <person name="Munk A.C."/>
            <person name="Brettin T."/>
            <person name="Detter J.C."/>
            <person name="Han C."/>
            <person name="Tapia R."/>
            <person name="Schmutz J."/>
            <person name="Larimer F."/>
            <person name="Land M."/>
            <person name="Hauser L."/>
            <person name="Challacombe J.F."/>
            <person name="Green L."/>
            <person name="Lindler L.E."/>
            <person name="Nikolich M.P."/>
            <person name="Richardson P."/>
        </authorList>
    </citation>
    <scope>NUCLEOTIDE SEQUENCE [LARGE SCALE GENOMIC DNA]</scope>
    <source>
        <strain>YPIII</strain>
    </source>
</reference>
<gene>
    <name evidence="1" type="primary">rplI</name>
    <name type="ordered locus">YPK_3781</name>
</gene>
<evidence type="ECO:0000255" key="1">
    <source>
        <dbReference type="HAMAP-Rule" id="MF_00503"/>
    </source>
</evidence>
<evidence type="ECO:0000305" key="2"/>
<accession>B1JMM1</accession>
<keyword id="KW-0687">Ribonucleoprotein</keyword>
<keyword id="KW-0689">Ribosomal protein</keyword>
<keyword id="KW-0694">RNA-binding</keyword>
<keyword id="KW-0699">rRNA-binding</keyword>
<comment type="function">
    <text evidence="1">Binds to the 23S rRNA.</text>
</comment>
<comment type="similarity">
    <text evidence="1">Belongs to the bacterial ribosomal protein bL9 family.</text>
</comment>
<dbReference type="EMBL" id="CP000950">
    <property type="protein sequence ID" value="ACA70048.1"/>
    <property type="molecule type" value="Genomic_DNA"/>
</dbReference>
<dbReference type="RefSeq" id="WP_002210156.1">
    <property type="nucleotide sequence ID" value="NZ_CP009792.1"/>
</dbReference>
<dbReference type="SMR" id="B1JMM1"/>
<dbReference type="GeneID" id="57975178"/>
<dbReference type="KEGG" id="ypy:YPK_3781"/>
<dbReference type="PATRIC" id="fig|502800.11.peg.131"/>
<dbReference type="GO" id="GO:1990904">
    <property type="term" value="C:ribonucleoprotein complex"/>
    <property type="evidence" value="ECO:0007669"/>
    <property type="project" value="UniProtKB-KW"/>
</dbReference>
<dbReference type="GO" id="GO:0005840">
    <property type="term" value="C:ribosome"/>
    <property type="evidence" value="ECO:0007669"/>
    <property type="project" value="UniProtKB-KW"/>
</dbReference>
<dbReference type="GO" id="GO:0019843">
    <property type="term" value="F:rRNA binding"/>
    <property type="evidence" value="ECO:0007669"/>
    <property type="project" value="UniProtKB-UniRule"/>
</dbReference>
<dbReference type="GO" id="GO:0003735">
    <property type="term" value="F:structural constituent of ribosome"/>
    <property type="evidence" value="ECO:0007669"/>
    <property type="project" value="InterPro"/>
</dbReference>
<dbReference type="GO" id="GO:0006412">
    <property type="term" value="P:translation"/>
    <property type="evidence" value="ECO:0007669"/>
    <property type="project" value="UniProtKB-UniRule"/>
</dbReference>
<dbReference type="FunFam" id="3.10.430.100:FF:000001">
    <property type="entry name" value="50S ribosomal protein L9"/>
    <property type="match status" value="1"/>
</dbReference>
<dbReference type="FunFam" id="3.40.5.10:FF:000001">
    <property type="entry name" value="50S ribosomal protein L9"/>
    <property type="match status" value="1"/>
</dbReference>
<dbReference type="Gene3D" id="3.10.430.100">
    <property type="entry name" value="Ribosomal protein L9, C-terminal domain"/>
    <property type="match status" value="1"/>
</dbReference>
<dbReference type="Gene3D" id="3.40.5.10">
    <property type="entry name" value="Ribosomal protein L9, N-terminal domain"/>
    <property type="match status" value="1"/>
</dbReference>
<dbReference type="HAMAP" id="MF_00503">
    <property type="entry name" value="Ribosomal_bL9"/>
    <property type="match status" value="1"/>
</dbReference>
<dbReference type="InterPro" id="IPR000244">
    <property type="entry name" value="Ribosomal_bL9"/>
</dbReference>
<dbReference type="InterPro" id="IPR009027">
    <property type="entry name" value="Ribosomal_bL9/RNase_H1_N"/>
</dbReference>
<dbReference type="InterPro" id="IPR020594">
    <property type="entry name" value="Ribosomal_bL9_bac/chp"/>
</dbReference>
<dbReference type="InterPro" id="IPR020069">
    <property type="entry name" value="Ribosomal_bL9_C"/>
</dbReference>
<dbReference type="InterPro" id="IPR036791">
    <property type="entry name" value="Ribosomal_bL9_C_sf"/>
</dbReference>
<dbReference type="InterPro" id="IPR020070">
    <property type="entry name" value="Ribosomal_bL9_N"/>
</dbReference>
<dbReference type="InterPro" id="IPR036935">
    <property type="entry name" value="Ribosomal_bL9_N_sf"/>
</dbReference>
<dbReference type="NCBIfam" id="TIGR00158">
    <property type="entry name" value="L9"/>
    <property type="match status" value="1"/>
</dbReference>
<dbReference type="PANTHER" id="PTHR21368">
    <property type="entry name" value="50S RIBOSOMAL PROTEIN L9"/>
    <property type="match status" value="1"/>
</dbReference>
<dbReference type="Pfam" id="PF03948">
    <property type="entry name" value="Ribosomal_L9_C"/>
    <property type="match status" value="1"/>
</dbReference>
<dbReference type="Pfam" id="PF01281">
    <property type="entry name" value="Ribosomal_L9_N"/>
    <property type="match status" value="1"/>
</dbReference>
<dbReference type="SUPFAM" id="SSF55658">
    <property type="entry name" value="L9 N-domain-like"/>
    <property type="match status" value="1"/>
</dbReference>
<dbReference type="SUPFAM" id="SSF55653">
    <property type="entry name" value="Ribosomal protein L9 C-domain"/>
    <property type="match status" value="1"/>
</dbReference>
<dbReference type="PROSITE" id="PS00651">
    <property type="entry name" value="RIBOSOMAL_L9"/>
    <property type="match status" value="1"/>
</dbReference>
<proteinExistence type="inferred from homology"/>
<sequence>MQVILLDKVANLGSLGDQVNVKAGYARNFLVPQGKAVPATKKNVEFFEARRAELEAKLADVLAAAEARATKINELVSVTISSKAGDEGKLFGSIGTRDIADAVTAAGVEVAKSEVRLPNGVLRTAGEHEVHFQVHSDVFAKLNVVVVPEA</sequence>
<feature type="chain" id="PRO_1000127001" description="Large ribosomal subunit protein bL9">
    <location>
        <begin position="1"/>
        <end position="150"/>
    </location>
</feature>
<protein>
    <recommendedName>
        <fullName evidence="1">Large ribosomal subunit protein bL9</fullName>
    </recommendedName>
    <alternativeName>
        <fullName evidence="2">50S ribosomal protein L9</fullName>
    </alternativeName>
</protein>